<sequence length="446" mass="48699">MSSISTESSSNLSLLENGGGGSDKPTAETSRRVRRTVSASSLIRKRSDLKLISRVRWEFMRRILTNLQEVLLGTKLFILFPAVPLAVVAHRYDCPRAWVFALSLLGLTPLAERISFLTEQIAFHTGPTVGGLMNATCGNATEMIIAILAVGQRKMRIVKLSLLGSILSNLLFVLGTSLFLGGISNLRKHQSFDPRQGDMNSMLLYLALLCQTLPMIMRFTMEAEEYDGSDVVVLSRASSFVMLIAYLAFLIFHLFSSHLSPPPPPLPQREDVHDDDVSDKEEEGAVIGMWSAIFWLIIMTLLVALLSDYLVSTIQDAADSWGLSVGFIGIILLPIVGNAAEHAGAVIFAFRNKLDITLGIALGSATQIALFVVPVTVLVAWTMGIEMDLNFNLLETACFALSILVTSLVLQDGTSNYMKGLVLLLCYVVIAACFFVSNSPSSKLLF</sequence>
<protein>
    <recommendedName>
        <fullName>Vacuolar cation/proton exchanger 4</fullName>
        <shortName>AtCAX4</shortName>
    </recommendedName>
    <alternativeName>
        <fullName>Ca(2+)/H(+) antiporter CAX4</fullName>
    </alternativeName>
    <alternativeName>
        <fullName>Ca(2+)/H(+) exchanger 4</fullName>
    </alternativeName>
    <alternativeName>
        <fullName>Protein CATION EXCHANGER 4</fullName>
    </alternativeName>
</protein>
<gene>
    <name type="primary">CAX4</name>
    <name type="ordered locus">At5g01490</name>
    <name type="ORF">F7A7.10</name>
</gene>
<accession>Q945S5</accession>
<accession>F4K9E5</accession>
<accession>Q9M025</accession>
<comment type="function">
    <text evidence="5">Vacuolar cation/proton exchanger (CAX). Translocates Ca(2+) and other metal ions into vacuoles using the proton gradient formed by H(+)-ATPase and H(+)-pyrophosphatase. Cation selectivity transport in tobacco root tonoplast vesicles is Cd(2+)&gt;Zn(2+)&gt;&gt;Ca(2+)&gt;&gt;&gt;Mn(2+).</text>
</comment>
<comment type="subcellular location">
    <subcellularLocation>
        <location evidence="7">Vacuole membrane</location>
        <topology evidence="7">Multi-pass membrane protein</topology>
    </subcellularLocation>
    <text>Tonoplast.</text>
</comment>
<comment type="alternative products">
    <event type="alternative splicing"/>
    <isoform>
        <id>Q945S5-1</id>
        <name>1</name>
        <sequence type="displayed"/>
    </isoform>
    <isoform>
        <id>Q945S5-2</id>
        <name>2</name>
        <sequence type="described" ref="VSP_042221"/>
    </isoform>
</comment>
<comment type="tissue specificity">
    <text evidence="3">Expressed at low levels in all tissues.</text>
</comment>
<comment type="induction">
    <text evidence="3">Slightly induced by Mn(2+), Na(+) and Ni(2+).</text>
</comment>
<comment type="biotechnology">
    <text evidence="4">CAX4 expression in tomato increases calcium content and prolonges shelf life and may serve as an alternative to the application of CaCl(2) used to extend shelf life in numerous agricultural commodities.</text>
</comment>
<comment type="similarity">
    <text evidence="6">Belongs to the Ca(2+):cation antiporter (CaCA) (TC 2.A.19) family. Cation/proton exchanger (CAX) subfamily.</text>
</comment>
<comment type="sequence caution" evidence="6">
    <conflict type="erroneous gene model prediction">
        <sequence resource="EMBL-CDS" id="CAB82265"/>
    </conflict>
</comment>
<proteinExistence type="evidence at protein level"/>
<reference key="1">
    <citation type="journal article" date="2002" name="Plant Physiol.">
        <title>Characterization of CAX4, an Arabidopsis H(+)/cation antiporter.</title>
        <authorList>
            <person name="Cheng N.-H."/>
            <person name="Pittman J.K."/>
            <person name="Shigaki T."/>
            <person name="Hirschi K.D."/>
        </authorList>
    </citation>
    <scope>NUCLEOTIDE SEQUENCE [MRNA] (ISOFORM 1)</scope>
    <scope>SUBCELLULAR LOCATION</scope>
    <scope>TISSUE SPECIFICITY</scope>
    <scope>INDUCTION</scope>
    <scope>MUTAGENESIS OF 88-VAL--ARG-96</scope>
    <source>
        <strain>cv. Landsberg erecta</strain>
    </source>
</reference>
<reference key="2">
    <citation type="journal article" date="2000" name="Nature">
        <title>Sequence and analysis of chromosome 5 of the plant Arabidopsis thaliana.</title>
        <authorList>
            <person name="Tabata S."/>
            <person name="Kaneko T."/>
            <person name="Nakamura Y."/>
            <person name="Kotani H."/>
            <person name="Kato T."/>
            <person name="Asamizu E."/>
            <person name="Miyajima N."/>
            <person name="Sasamoto S."/>
            <person name="Kimura T."/>
            <person name="Hosouchi T."/>
            <person name="Kawashima K."/>
            <person name="Kohara M."/>
            <person name="Matsumoto M."/>
            <person name="Matsuno A."/>
            <person name="Muraki A."/>
            <person name="Nakayama S."/>
            <person name="Nakazaki N."/>
            <person name="Naruo K."/>
            <person name="Okumura S."/>
            <person name="Shinpo S."/>
            <person name="Takeuchi C."/>
            <person name="Wada T."/>
            <person name="Watanabe A."/>
            <person name="Yamada M."/>
            <person name="Yasuda M."/>
            <person name="Sato S."/>
            <person name="de la Bastide M."/>
            <person name="Huang E."/>
            <person name="Spiegel L."/>
            <person name="Gnoj L."/>
            <person name="O'Shaughnessy A."/>
            <person name="Preston R."/>
            <person name="Habermann K."/>
            <person name="Murray J."/>
            <person name="Johnson D."/>
            <person name="Rohlfing T."/>
            <person name="Nelson J."/>
            <person name="Stoneking T."/>
            <person name="Pepin K."/>
            <person name="Spieth J."/>
            <person name="Sekhon M."/>
            <person name="Armstrong J."/>
            <person name="Becker M."/>
            <person name="Belter E."/>
            <person name="Cordum H."/>
            <person name="Cordes M."/>
            <person name="Courtney L."/>
            <person name="Courtney W."/>
            <person name="Dante M."/>
            <person name="Du H."/>
            <person name="Edwards J."/>
            <person name="Fryman J."/>
            <person name="Haakensen B."/>
            <person name="Lamar E."/>
            <person name="Latreille P."/>
            <person name="Leonard S."/>
            <person name="Meyer R."/>
            <person name="Mulvaney E."/>
            <person name="Ozersky P."/>
            <person name="Riley A."/>
            <person name="Strowmatt C."/>
            <person name="Wagner-McPherson C."/>
            <person name="Wollam A."/>
            <person name="Yoakum M."/>
            <person name="Bell M."/>
            <person name="Dedhia N."/>
            <person name="Parnell L."/>
            <person name="Shah R."/>
            <person name="Rodriguez M."/>
            <person name="Hoon See L."/>
            <person name="Vil D."/>
            <person name="Baker J."/>
            <person name="Kirchoff K."/>
            <person name="Toth K."/>
            <person name="King L."/>
            <person name="Bahret A."/>
            <person name="Miller B."/>
            <person name="Marra M.A."/>
            <person name="Martienssen R."/>
            <person name="McCombie W.R."/>
            <person name="Wilson R.K."/>
            <person name="Murphy G."/>
            <person name="Bancroft I."/>
            <person name="Volckaert G."/>
            <person name="Wambutt R."/>
            <person name="Duesterhoeft A."/>
            <person name="Stiekema W."/>
            <person name="Pohl T."/>
            <person name="Entian K.-D."/>
            <person name="Terryn N."/>
            <person name="Hartley N."/>
            <person name="Bent E."/>
            <person name="Johnson S."/>
            <person name="Langham S.-A."/>
            <person name="McCullagh B."/>
            <person name="Robben J."/>
            <person name="Grymonprez B."/>
            <person name="Zimmermann W."/>
            <person name="Ramsperger U."/>
            <person name="Wedler H."/>
            <person name="Balke K."/>
            <person name="Wedler E."/>
            <person name="Peters S."/>
            <person name="van Staveren M."/>
            <person name="Dirkse W."/>
            <person name="Mooijman P."/>
            <person name="Klein Lankhorst R."/>
            <person name="Weitzenegger T."/>
            <person name="Bothe G."/>
            <person name="Rose M."/>
            <person name="Hauf J."/>
            <person name="Berneiser S."/>
            <person name="Hempel S."/>
            <person name="Feldpausch M."/>
            <person name="Lamberth S."/>
            <person name="Villarroel R."/>
            <person name="Gielen J."/>
            <person name="Ardiles W."/>
            <person name="Bents O."/>
            <person name="Lemcke K."/>
            <person name="Kolesov G."/>
            <person name="Mayer K.F.X."/>
            <person name="Rudd S."/>
            <person name="Schoof H."/>
            <person name="Schueller C."/>
            <person name="Zaccaria P."/>
            <person name="Mewes H.-W."/>
            <person name="Bevan M."/>
            <person name="Fransz P.F."/>
        </authorList>
    </citation>
    <scope>NUCLEOTIDE SEQUENCE [LARGE SCALE GENOMIC DNA]</scope>
    <source>
        <strain>cv. Columbia</strain>
    </source>
</reference>
<reference key="3">
    <citation type="journal article" date="2017" name="Plant J.">
        <title>Araport11: a complete reannotation of the Arabidopsis thaliana reference genome.</title>
        <authorList>
            <person name="Cheng C.Y."/>
            <person name="Krishnakumar V."/>
            <person name="Chan A.P."/>
            <person name="Thibaud-Nissen F."/>
            <person name="Schobel S."/>
            <person name="Town C.D."/>
        </authorList>
    </citation>
    <scope>GENOME REANNOTATION</scope>
    <source>
        <strain>cv. Columbia</strain>
    </source>
</reference>
<reference key="4">
    <citation type="journal article" date="2001" name="Plant Physiol.">
        <title>Phylogenetic relationships within cation transporter families of Arabidopsis.</title>
        <authorList>
            <person name="Maeser P."/>
            <person name="Thomine S."/>
            <person name="Schroeder J.I."/>
            <person name="Ward J.M."/>
            <person name="Hirschi K."/>
            <person name="Sze H."/>
            <person name="Talke I.N."/>
            <person name="Amtmann A."/>
            <person name="Maathuis F.J.M."/>
            <person name="Sanders D."/>
            <person name="Harper J.F."/>
            <person name="Tchieu J."/>
            <person name="Gribskov M."/>
            <person name="Persans M.W."/>
            <person name="Salt D.E."/>
            <person name="Kim S.A."/>
            <person name="Guerinot M.L."/>
        </authorList>
    </citation>
    <scope>GENE FAMILY</scope>
    <scope>NOMENCLATURE</scope>
</reference>
<reference key="5">
    <citation type="journal article" date="2005" name="Plant Physiol.">
        <title>Increased calcium levels and prolonged shelf life in tomatoes expressing Arabidopsis H+/Ca2+ transporters.</title>
        <authorList>
            <person name="Park S."/>
            <person name="Cheng N.-H."/>
            <person name="Pittman J.K."/>
            <person name="Yoo K.S."/>
            <person name="Park J."/>
            <person name="Smith R.H."/>
            <person name="Hirschi K.D."/>
        </authorList>
    </citation>
    <scope>BIOTECHNOLOGY</scope>
</reference>
<reference key="6">
    <citation type="journal article" date="2007" name="Planta">
        <title>Enhanced Cd(2+)-selective root-tonoplast-transport in tobaccos expressing Arabidopsis cation exchangers.</title>
        <authorList>
            <person name="Koren'kov V."/>
            <person name="Park S."/>
            <person name="Cheng N.-H."/>
            <person name="Sreevidya C."/>
            <person name="Lachmansingh J."/>
            <person name="Morris J."/>
            <person name="Hirschi K."/>
            <person name="Wagner G.J."/>
        </authorList>
    </citation>
    <scope>FUNCTION</scope>
</reference>
<dbReference type="EMBL" id="AF409107">
    <property type="protein sequence ID" value="AAK97656.1"/>
    <property type="molecule type" value="mRNA"/>
</dbReference>
<dbReference type="EMBL" id="AL161946">
    <property type="protein sequence ID" value="CAB82265.1"/>
    <property type="status" value="ALT_SEQ"/>
    <property type="molecule type" value="Genomic_DNA"/>
</dbReference>
<dbReference type="EMBL" id="CP002688">
    <property type="protein sequence ID" value="AED90352.1"/>
    <property type="molecule type" value="Genomic_DNA"/>
</dbReference>
<dbReference type="EMBL" id="CP002688">
    <property type="protein sequence ID" value="ANM69424.1"/>
    <property type="molecule type" value="Genomic_DNA"/>
</dbReference>
<dbReference type="PIR" id="T48170">
    <property type="entry name" value="T48170"/>
</dbReference>
<dbReference type="RefSeq" id="NP_001331104.1">
    <molecule id="Q945S5-2"/>
    <property type="nucleotide sequence ID" value="NM_001342594.1"/>
</dbReference>
<dbReference type="RefSeq" id="NP_568091.2">
    <molecule id="Q945S5-2"/>
    <property type="nucleotide sequence ID" value="NM_120227.4"/>
</dbReference>
<dbReference type="SMR" id="Q945S5"/>
<dbReference type="FunCoup" id="Q945S5">
    <property type="interactions" value="27"/>
</dbReference>
<dbReference type="STRING" id="3702.Q945S5"/>
<dbReference type="TCDB" id="2.A.19.2.9">
    <property type="family name" value="the ca(2+):cation antiporter (caca) family"/>
</dbReference>
<dbReference type="GlyGen" id="Q945S5">
    <property type="glycosylation" value="1 site"/>
</dbReference>
<dbReference type="iPTMnet" id="Q945S5"/>
<dbReference type="PaxDb" id="3702-AT5G01490.1"/>
<dbReference type="ProteomicsDB" id="222790">
    <molecule id="Q945S5-1"/>
</dbReference>
<dbReference type="EnsemblPlants" id="AT5G01490.1">
    <molecule id="Q945S5-2"/>
    <property type="protein sequence ID" value="AT5G01490.1"/>
    <property type="gene ID" value="AT5G01490"/>
</dbReference>
<dbReference type="EnsemblPlants" id="AT5G01490.2">
    <molecule id="Q945S5-2"/>
    <property type="protein sequence ID" value="AT5G01490.2"/>
    <property type="gene ID" value="AT5G01490"/>
</dbReference>
<dbReference type="GeneID" id="831754"/>
<dbReference type="Gramene" id="AT5G01490.1">
    <molecule id="Q945S5-2"/>
    <property type="protein sequence ID" value="AT5G01490.1"/>
    <property type="gene ID" value="AT5G01490"/>
</dbReference>
<dbReference type="Gramene" id="AT5G01490.2">
    <molecule id="Q945S5-2"/>
    <property type="protein sequence ID" value="AT5G01490.2"/>
    <property type="gene ID" value="AT5G01490"/>
</dbReference>
<dbReference type="KEGG" id="ath:AT5G01490"/>
<dbReference type="Araport" id="AT5G01490"/>
<dbReference type="TAIR" id="AT5G01490">
    <property type="gene designation" value="CAX4"/>
</dbReference>
<dbReference type="eggNOG" id="KOG1397">
    <property type="taxonomic scope" value="Eukaryota"/>
</dbReference>
<dbReference type="HOGENOM" id="CLU_008721_2_0_1"/>
<dbReference type="InParanoid" id="Q945S5"/>
<dbReference type="PhylomeDB" id="Q945S5"/>
<dbReference type="PRO" id="PR:Q945S5"/>
<dbReference type="Proteomes" id="UP000006548">
    <property type="component" value="Chromosome 5"/>
</dbReference>
<dbReference type="ExpressionAtlas" id="Q945S5">
    <property type="expression patterns" value="baseline and differential"/>
</dbReference>
<dbReference type="GO" id="GO:0009705">
    <property type="term" value="C:plant-type vacuole membrane"/>
    <property type="evidence" value="ECO:0000314"/>
    <property type="project" value="TAIR"/>
</dbReference>
<dbReference type="GO" id="GO:0015368">
    <property type="term" value="F:calcium:monoatomic cation antiporter activity"/>
    <property type="evidence" value="ECO:0000314"/>
    <property type="project" value="TAIR"/>
</dbReference>
<dbReference type="GO" id="GO:0015369">
    <property type="term" value="F:calcium:proton antiporter activity"/>
    <property type="evidence" value="ECO:0000315"/>
    <property type="project" value="TAIR"/>
</dbReference>
<dbReference type="GO" id="GO:0009733">
    <property type="term" value="P:response to auxin"/>
    <property type="evidence" value="ECO:0000315"/>
    <property type="project" value="TAIR"/>
</dbReference>
<dbReference type="GO" id="GO:0048364">
    <property type="term" value="P:root development"/>
    <property type="evidence" value="ECO:0000315"/>
    <property type="project" value="TAIR"/>
</dbReference>
<dbReference type="FunFam" id="1.20.1420.30:FF:000008">
    <property type="entry name" value="Vacuolar cation/proton exchanger"/>
    <property type="match status" value="1"/>
</dbReference>
<dbReference type="FunFam" id="1.20.1420.30:FF:000012">
    <property type="entry name" value="Vacuolar cation/proton exchanger"/>
    <property type="match status" value="1"/>
</dbReference>
<dbReference type="Gene3D" id="1.20.1420.30">
    <property type="entry name" value="NCX, central ion-binding region"/>
    <property type="match status" value="2"/>
</dbReference>
<dbReference type="InterPro" id="IPR004713">
    <property type="entry name" value="CaH_exchang"/>
</dbReference>
<dbReference type="InterPro" id="IPR004798">
    <property type="entry name" value="CAX-like"/>
</dbReference>
<dbReference type="InterPro" id="IPR004837">
    <property type="entry name" value="NaCa_Exmemb"/>
</dbReference>
<dbReference type="InterPro" id="IPR044880">
    <property type="entry name" value="NCX_ion-bd_dom_sf"/>
</dbReference>
<dbReference type="NCBIfam" id="TIGR00846">
    <property type="entry name" value="caca2"/>
    <property type="match status" value="1"/>
</dbReference>
<dbReference type="NCBIfam" id="TIGR00378">
    <property type="entry name" value="cax"/>
    <property type="match status" value="1"/>
</dbReference>
<dbReference type="PANTHER" id="PTHR31503">
    <property type="entry name" value="VACUOLAR CALCIUM ION TRANSPORTER"/>
    <property type="match status" value="1"/>
</dbReference>
<dbReference type="PANTHER" id="PTHR31503:SF51">
    <property type="entry name" value="VACUOLAR CATION_PROTON EXCHANGER 4"/>
    <property type="match status" value="1"/>
</dbReference>
<dbReference type="Pfam" id="PF01699">
    <property type="entry name" value="Na_Ca_ex"/>
    <property type="match status" value="2"/>
</dbReference>
<name>CAX4_ARATH</name>
<keyword id="KW-0025">Alternative splicing</keyword>
<keyword id="KW-0050">Antiport</keyword>
<keyword id="KW-0106">Calcium</keyword>
<keyword id="KW-0109">Calcium transport</keyword>
<keyword id="KW-0406">Ion transport</keyword>
<keyword id="KW-0472">Membrane</keyword>
<keyword id="KW-1185">Reference proteome</keyword>
<keyword id="KW-0812">Transmembrane</keyword>
<keyword id="KW-1133">Transmembrane helix</keyword>
<keyword id="KW-0813">Transport</keyword>
<keyword id="KW-0926">Vacuole</keyword>
<organism>
    <name type="scientific">Arabidopsis thaliana</name>
    <name type="common">Mouse-ear cress</name>
    <dbReference type="NCBI Taxonomy" id="3702"/>
    <lineage>
        <taxon>Eukaryota</taxon>
        <taxon>Viridiplantae</taxon>
        <taxon>Streptophyta</taxon>
        <taxon>Embryophyta</taxon>
        <taxon>Tracheophyta</taxon>
        <taxon>Spermatophyta</taxon>
        <taxon>Magnoliopsida</taxon>
        <taxon>eudicotyledons</taxon>
        <taxon>Gunneridae</taxon>
        <taxon>Pentapetalae</taxon>
        <taxon>rosids</taxon>
        <taxon>malvids</taxon>
        <taxon>Brassicales</taxon>
        <taxon>Brassicaceae</taxon>
        <taxon>Camelineae</taxon>
        <taxon>Arabidopsis</taxon>
    </lineage>
</organism>
<feature type="chain" id="PRO_0000270153" description="Vacuolar cation/proton exchanger 4">
    <location>
        <begin position="1"/>
        <end position="446"/>
    </location>
</feature>
<feature type="topological domain" description="Cytoplasmic" evidence="1">
    <location>
        <begin position="1"/>
        <end position="69"/>
    </location>
</feature>
<feature type="transmembrane region" description="Helical" evidence="1">
    <location>
        <begin position="70"/>
        <end position="90"/>
    </location>
</feature>
<feature type="topological domain" description="Extracellular" evidence="1">
    <location>
        <begin position="91"/>
        <end position="96"/>
    </location>
</feature>
<feature type="transmembrane region" description="Helical" evidence="1">
    <location>
        <begin position="97"/>
        <end position="117"/>
    </location>
</feature>
<feature type="topological domain" description="Cytoplasmic" evidence="1">
    <location>
        <begin position="118"/>
        <end position="128"/>
    </location>
</feature>
<feature type="transmembrane region" description="Helical" evidence="1">
    <location>
        <begin position="129"/>
        <end position="149"/>
    </location>
</feature>
<feature type="topological domain" description="Extracellular" evidence="1">
    <location>
        <begin position="150"/>
        <end position="162"/>
    </location>
</feature>
<feature type="transmembrane region" description="Helical" evidence="1">
    <location>
        <begin position="163"/>
        <end position="183"/>
    </location>
</feature>
<feature type="topological domain" description="Cytoplasmic" evidence="1">
    <location>
        <begin position="184"/>
        <end position="196"/>
    </location>
</feature>
<feature type="transmembrane region" description="Helical" evidence="1">
    <location>
        <begin position="197"/>
        <end position="217"/>
    </location>
</feature>
<feature type="topological domain" description="Extracellular" evidence="1">
    <location>
        <begin position="218"/>
        <end position="238"/>
    </location>
</feature>
<feature type="transmembrane region" description="Helical" evidence="1">
    <location>
        <begin position="239"/>
        <end position="259"/>
    </location>
</feature>
<feature type="topological domain" description="Cytoplasmic" evidence="1">
    <location>
        <begin position="260"/>
        <end position="285"/>
    </location>
</feature>
<feature type="transmembrane region" description="Helical" evidence="1">
    <location>
        <begin position="286"/>
        <end position="306"/>
    </location>
</feature>
<feature type="topological domain" description="Extracellular" evidence="1">
    <location>
        <begin position="307"/>
        <end position="319"/>
    </location>
</feature>
<feature type="transmembrane region" description="Helical" evidence="1">
    <location>
        <begin position="320"/>
        <end position="340"/>
    </location>
</feature>
<feature type="topological domain" description="Cytoplasmic" evidence="1">
    <location>
        <begin position="341"/>
        <end position="359"/>
    </location>
</feature>
<feature type="transmembrane region" description="Helical" evidence="1">
    <location>
        <begin position="360"/>
        <end position="380"/>
    </location>
</feature>
<feature type="topological domain" description="Extracellular" evidence="1">
    <location>
        <begin position="381"/>
        <end position="388"/>
    </location>
</feature>
<feature type="transmembrane region" description="Helical" evidence="1">
    <location>
        <begin position="389"/>
        <end position="409"/>
    </location>
</feature>
<feature type="topological domain" description="Cytoplasmic" evidence="1">
    <location>
        <begin position="410"/>
        <end position="416"/>
    </location>
</feature>
<feature type="transmembrane region" description="Helical" evidence="1">
    <location>
        <begin position="417"/>
        <end position="437"/>
    </location>
</feature>
<feature type="topological domain" description="Extracellular" evidence="1">
    <location>
        <begin position="438"/>
        <end position="446"/>
    </location>
</feature>
<feature type="region of interest" description="Disordered" evidence="2">
    <location>
        <begin position="1"/>
        <end position="33"/>
    </location>
</feature>
<feature type="region of interest" description="Cation selection" evidence="1">
    <location>
        <begin position="138"/>
        <end position="173"/>
    </location>
</feature>
<feature type="region of interest" description="Cation selection" evidence="1">
    <location>
        <begin position="337"/>
        <end position="372"/>
    </location>
</feature>
<feature type="compositionally biased region" description="Low complexity" evidence="2">
    <location>
        <begin position="1"/>
        <end position="16"/>
    </location>
</feature>
<feature type="splice variant" id="VSP_042221" description="In isoform 2." evidence="6">
    <original>SKLLF</original>
    <variation>TETNTTNHTITKR</variation>
    <location>
        <begin position="442"/>
        <end position="446"/>
    </location>
</feature>
<feature type="mutagenesis site" description="Facilitates Ca(2+)/H(+) exchange activity." evidence="3">
    <original>VAHRYDCPR</original>
    <variation>ICTYCGVSQ</variation>
    <location>
        <begin position="88"/>
        <end position="96"/>
    </location>
</feature>
<feature type="sequence conflict" description="In Ref. 1; AAK97656." evidence="6" ref="1">
    <original>S</original>
    <variation>C</variation>
    <location>
        <position position="13"/>
    </location>
</feature>
<feature type="sequence conflict" description="In Ref. 1; AAK97656." evidence="6" ref="1">
    <original>H</original>
    <variation>Y</variation>
    <location>
        <position position="273"/>
    </location>
</feature>
<feature type="sequence conflict" description="In Ref. 1; AAK97656." evidence="6" ref="1">
    <original>FALSIL</original>
    <variation>LAMSII</variation>
    <location>
        <begin position="399"/>
        <end position="404"/>
    </location>
</feature>
<feature type="sequence conflict" description="In Ref. 1; AAK97656." evidence="6" ref="1">
    <original>V</original>
    <variation>F</variation>
    <location>
        <position position="428"/>
    </location>
</feature>
<evidence type="ECO:0000255" key="1"/>
<evidence type="ECO:0000256" key="2">
    <source>
        <dbReference type="SAM" id="MobiDB-lite"/>
    </source>
</evidence>
<evidence type="ECO:0000269" key="3">
    <source>
    </source>
</evidence>
<evidence type="ECO:0000269" key="4">
    <source>
    </source>
</evidence>
<evidence type="ECO:0000269" key="5">
    <source>
    </source>
</evidence>
<evidence type="ECO:0000305" key="6"/>
<evidence type="ECO:0000305" key="7">
    <source>
    </source>
</evidence>